<feature type="chain" id="PRO_0000142632" description="Hemagglutinin-neuraminidase">
    <location>
        <begin position="1"/>
        <end position="573"/>
    </location>
</feature>
<feature type="topological domain" description="Intravirion" evidence="6">
    <location>
        <begin position="1"/>
        <end position="27"/>
    </location>
</feature>
<feature type="transmembrane region" description="Helical" evidence="6">
    <location>
        <begin position="28"/>
        <end position="48"/>
    </location>
</feature>
<feature type="topological domain" description="Virion surface" evidence="6">
    <location>
        <begin position="49"/>
        <end position="573"/>
    </location>
</feature>
<feature type="region of interest" description="Involved in neuraminidase activity" evidence="4">
    <location>
        <begin position="235"/>
        <end position="240"/>
    </location>
</feature>
<feature type="glycosylation site" description="N-linked (GlcNAc...) asparagine; by host" evidence="6">
    <location>
        <position position="258"/>
    </location>
</feature>
<feature type="glycosylation site" description="N-linked (GlcNAc...) asparagine; by host" evidence="6">
    <location>
        <position position="330"/>
    </location>
</feature>
<feature type="glycosylation site" description="N-linked (GlcNAc...) asparagine; by host" evidence="6">
    <location>
        <position position="339"/>
    </location>
</feature>
<feature type="glycosylation site" description="N-linked (GlcNAc...) asparagine; by host" evidence="6">
    <location>
        <position position="347"/>
    </location>
</feature>
<feature type="glycosylation site" description="N-linked (GlcNAc...) asparagine; by host" evidence="6">
    <location>
        <position position="433"/>
    </location>
</feature>
<feature type="glycosylation site" description="N-linked (GlcNAc...) asparagine; by host" evidence="6">
    <location>
        <position position="502"/>
    </location>
</feature>
<feature type="glycosylation site" description="N-linked (GlcNAc...) asparagine; by host" evidence="6">
    <location>
        <position position="530"/>
    </location>
</feature>
<feature type="disulfide bond" evidence="5">
    <location>
        <begin position="173"/>
        <end position="197"/>
    </location>
</feature>
<feature type="disulfide bond" evidence="5">
    <location>
        <begin position="187"/>
        <end position="248"/>
    </location>
</feature>
<feature type="disulfide bond" evidence="5">
    <location>
        <begin position="239"/>
        <end position="252"/>
    </location>
</feature>
<feature type="disulfide bond" evidence="5">
    <location>
        <begin position="345"/>
        <end position="466"/>
    </location>
</feature>
<feature type="disulfide bond" evidence="5">
    <location>
        <begin position="377"/>
        <end position="387"/>
    </location>
</feature>
<feature type="disulfide bond" evidence="5">
    <location>
        <begin position="460"/>
        <end position="470"/>
    </location>
</feature>
<feature type="disulfide bond" evidence="5">
    <location>
        <begin position="540"/>
        <end position="551"/>
    </location>
</feature>
<protein>
    <recommendedName>
        <fullName>Hemagglutinin-neuraminidase</fullName>
        <ecNumber evidence="3">3.2.1.18</ecNumber>
    </recommendedName>
</protein>
<evidence type="ECO:0000250" key="1"/>
<evidence type="ECO:0000250" key="2">
    <source>
        <dbReference type="UniProtKB" id="P04853"/>
    </source>
</evidence>
<evidence type="ECO:0000250" key="3">
    <source>
        <dbReference type="UniProtKB" id="P25465"/>
    </source>
</evidence>
<evidence type="ECO:0000250" key="4">
    <source>
        <dbReference type="UniProtKB" id="Q91UL0"/>
    </source>
</evidence>
<evidence type="ECO:0000250" key="5">
    <source>
        <dbReference type="UniProtKB" id="Q9WAF5"/>
    </source>
</evidence>
<evidence type="ECO:0000255" key="6"/>
<evidence type="ECO:0000305" key="7"/>
<keyword id="KW-1015">Disulfide bond</keyword>
<keyword id="KW-0325">Glycoprotein</keyword>
<keyword id="KW-0348">Hemagglutinin</keyword>
<keyword id="KW-1032">Host cell membrane</keyword>
<keyword id="KW-1043">Host membrane</keyword>
<keyword id="KW-0945">Host-virus interaction</keyword>
<keyword id="KW-0378">Hydrolase</keyword>
<keyword id="KW-0472">Membrane</keyword>
<keyword id="KW-0735">Signal-anchor</keyword>
<keyword id="KW-0812">Transmembrane</keyword>
<keyword id="KW-1133">Transmembrane helix</keyword>
<keyword id="KW-1161">Viral attachment to host cell</keyword>
<keyword id="KW-0261">Viral envelope protein</keyword>
<keyword id="KW-0946">Virion</keyword>
<keyword id="KW-1160">Virus entry into host cell</keyword>
<gene>
    <name type="primary">HN</name>
</gene>
<dbReference type="EC" id="3.2.1.18" evidence="3"/>
<dbReference type="EMBL" id="M34033">
    <property type="protein sequence ID" value="AAA46799.1"/>
    <property type="molecule type" value="Genomic_RNA"/>
</dbReference>
<dbReference type="PIR" id="A34683">
    <property type="entry name" value="HNNZ4A"/>
</dbReference>
<dbReference type="SMR" id="P21526"/>
<dbReference type="IntAct" id="P21526">
    <property type="interactions" value="1"/>
</dbReference>
<dbReference type="CAZy" id="GH83">
    <property type="family name" value="Glycoside Hydrolase Family 83"/>
</dbReference>
<dbReference type="GlyCosmos" id="P21526">
    <property type="glycosylation" value="7 sites, No reported glycans"/>
</dbReference>
<dbReference type="GO" id="GO:0020002">
    <property type="term" value="C:host cell plasma membrane"/>
    <property type="evidence" value="ECO:0007669"/>
    <property type="project" value="UniProtKB-SubCell"/>
</dbReference>
<dbReference type="GO" id="GO:0016020">
    <property type="term" value="C:membrane"/>
    <property type="evidence" value="ECO:0007669"/>
    <property type="project" value="UniProtKB-KW"/>
</dbReference>
<dbReference type="GO" id="GO:0019031">
    <property type="term" value="C:viral envelope"/>
    <property type="evidence" value="ECO:0007669"/>
    <property type="project" value="UniProtKB-KW"/>
</dbReference>
<dbReference type="GO" id="GO:0055036">
    <property type="term" value="C:virion membrane"/>
    <property type="evidence" value="ECO:0007669"/>
    <property type="project" value="UniProtKB-SubCell"/>
</dbReference>
<dbReference type="GO" id="GO:0004308">
    <property type="term" value="F:exo-alpha-sialidase activity"/>
    <property type="evidence" value="ECO:0007669"/>
    <property type="project" value="UniProtKB-EC"/>
</dbReference>
<dbReference type="GO" id="GO:0046789">
    <property type="term" value="F:host cell surface receptor binding"/>
    <property type="evidence" value="ECO:0007669"/>
    <property type="project" value="InterPro"/>
</dbReference>
<dbReference type="GO" id="GO:0046718">
    <property type="term" value="P:symbiont entry into host cell"/>
    <property type="evidence" value="ECO:0007669"/>
    <property type="project" value="UniProtKB-KW"/>
</dbReference>
<dbReference type="GO" id="GO:0019062">
    <property type="term" value="P:virion attachment to host cell"/>
    <property type="evidence" value="ECO:0007669"/>
    <property type="project" value="UniProtKB-KW"/>
</dbReference>
<dbReference type="CDD" id="cd15469">
    <property type="entry name" value="HN"/>
    <property type="match status" value="1"/>
</dbReference>
<dbReference type="Gene3D" id="1.20.5.110">
    <property type="match status" value="1"/>
</dbReference>
<dbReference type="Gene3D" id="2.120.10.10">
    <property type="match status" value="1"/>
</dbReference>
<dbReference type="InterPro" id="IPR016285">
    <property type="entry name" value="Hemagglutn-neuramid"/>
</dbReference>
<dbReference type="InterPro" id="IPR000665">
    <property type="entry name" value="Hemagglutn/HN"/>
</dbReference>
<dbReference type="InterPro" id="IPR036278">
    <property type="entry name" value="Sialidase_sf"/>
</dbReference>
<dbReference type="Pfam" id="PF00423">
    <property type="entry name" value="HN"/>
    <property type="match status" value="1"/>
</dbReference>
<dbReference type="PIRSF" id="PIRSF001072">
    <property type="entry name" value="Hemagglut-neuramid_paramyxoV"/>
    <property type="match status" value="1"/>
</dbReference>
<dbReference type="SUPFAM" id="SSF50939">
    <property type="entry name" value="Sialidases"/>
    <property type="match status" value="1"/>
</dbReference>
<sequence>MQDSHGNTQILNQANSMVKRTWRLLFRIATLILLVSIFVLSLIIVLQSTPGNLQNDINIIRKELNELMENFETTSKSLLSVSNQITYDVSVLTPIRQEAIETNIISKIKDHCKDRVIKEGSTCTLNRSPLHDVSFLNGFNKFYFTYKDNMQIKFKSLLDYPNFIPTATTPHGCIRIPSFSLGQTHWCYTHNINLLGCADPASSNQYVSLGTLQVLKMGDPYFKVEHSHYLNDGRNRKSCSVVAVPDGCLRNCVTMTKNETENFKDLNWQHNYLHTYHIMVPLKTRIINPPGSSRDWVHIAPGVGSGLLYAKLLIFPLYGGLTEKSVIHNNQSGKYFFPNSTKLQCRNSTMEKIKGAKDSYTITYFSGRLIQSAFLVCDLRQFLSEDCEILIPSNDYMMVGAEGRLYNIENNIFYYQRGSSWWPYPSLYRIRLNLSKKYPRITEIKFTKIEIAPRPGNKDCPGNKACPKECITGVYQDILPLSYPNTAFPHLKQAYYTGFYLNNSLERRNPTFYTADNLDYHQQERLGKFNLTAGYSTTTCFKQTTTARLYCLYIIEVGDSVIGDFQITLFLAA</sequence>
<name>HN_PI4HA</name>
<accession>P21526</accession>
<organismHost>
    <name type="scientific">Homo sapiens</name>
    <name type="common">Human</name>
    <dbReference type="NCBI Taxonomy" id="9606"/>
</organismHost>
<comment type="function">
    <text evidence="1">Attaches the virus to sialic acid-containing cell receptors and thereby initiating infection. Binding of HN protein to the receptor induces a conformational change that allows the F protein to trigger virion/cell membranes fusion (By similarity).</text>
</comment>
<comment type="function">
    <text evidence="1">Neuraminidase activity ensures the efficient spread of the virus by dissociating the mature virions from the neuraminic acid containing glycoproteins.</text>
</comment>
<comment type="catalytic activity">
    <reaction evidence="3">
        <text>Hydrolysis of alpha-(2-&gt;3)-, alpha-(2-&gt;6)-, alpha-(2-&gt;8)- glycosidic linkages of terminal sialic acid residues in oligosaccharides, glycoproteins, glycolipids, colominic acid and synthetic substrates.</text>
        <dbReference type="EC" id="3.2.1.18"/>
    </reaction>
</comment>
<comment type="subunit">
    <text evidence="2 5">Homotetramer; composed of disulfide-linked homodimers (By similarity). Interacts with F protein trimer (By similarity).</text>
</comment>
<comment type="subcellular location">
    <subcellularLocation>
        <location evidence="7">Virion membrane</location>
        <topology evidence="7">Single-pass type II membrane protein</topology>
    </subcellularLocation>
    <subcellularLocation>
        <location evidence="7">Host cell membrane</location>
        <topology evidence="7">Single-pass type II membrane protein</topology>
    </subcellularLocation>
</comment>
<comment type="domain">
    <text evidence="5">The C-terminus (head domain) is involved in binding the cellular receptor.</text>
</comment>
<comment type="similarity">
    <text evidence="7">Belongs to the paramyxoviruses hemagglutinin-neuraminidase family.</text>
</comment>
<reference key="1">
    <citation type="journal article" date="1990" name="Virology">
        <title>Molecular cloning and sequence analysis of human parainfluenza type 4A virus HN gene: its irregularities on structure and activities.</title>
        <authorList>
            <person name="Bando H."/>
            <person name="Kondo K."/>
            <person name="Kawano M."/>
            <person name="Komada H."/>
            <person name="Tsurudome M."/>
            <person name="Nishio M."/>
            <person name="Ito Y."/>
        </authorList>
    </citation>
    <scope>NUCLEOTIDE SEQUENCE [GENOMIC RNA]</scope>
</reference>
<proteinExistence type="inferred from homology"/>
<organism>
    <name type="scientific">Human parainfluenza 4a virus (strain Toshiba)</name>
    <name type="common">HPIV-4a</name>
    <dbReference type="NCBI Taxonomy" id="11225"/>
    <lineage>
        <taxon>Viruses</taxon>
        <taxon>Riboviria</taxon>
        <taxon>Orthornavirae</taxon>
        <taxon>Negarnaviricota</taxon>
        <taxon>Haploviricotina</taxon>
        <taxon>Monjiviricetes</taxon>
        <taxon>Mononegavirales</taxon>
        <taxon>Paramyxoviridae</taxon>
        <taxon>Rubulavirinae</taxon>
        <taxon>Orthorubulavirus</taxon>
        <taxon>Orthorubulavirus hominis</taxon>
        <taxon>Human orthorubulavirus 4</taxon>
    </lineage>
</organism>